<accession>Q70XG4</accession>
<organism>
    <name type="scientific">Thylamys elegans</name>
    <name type="common">Elegant fat-tailed mouse opossum</name>
    <dbReference type="NCBI Taxonomy" id="191871"/>
    <lineage>
        <taxon>Eukaryota</taxon>
        <taxon>Metazoa</taxon>
        <taxon>Chordata</taxon>
        <taxon>Craniata</taxon>
        <taxon>Vertebrata</taxon>
        <taxon>Euteleostomi</taxon>
        <taxon>Mammalia</taxon>
        <taxon>Metatheria</taxon>
        <taxon>Didelphimorphia</taxon>
        <taxon>Didelphidae</taxon>
        <taxon>Thylamys</taxon>
    </lineage>
</organism>
<dbReference type="EC" id="7.1.1.2"/>
<dbReference type="EMBL" id="AJ508401">
    <property type="protein sequence ID" value="CAD48247.1"/>
    <property type="molecule type" value="Genomic_DNA"/>
</dbReference>
<dbReference type="RefSeq" id="YP_003669.1">
    <property type="nucleotide sequence ID" value="NC_005825.1"/>
</dbReference>
<dbReference type="SMR" id="Q70XG4"/>
<dbReference type="GeneID" id="2769151"/>
<dbReference type="CTD" id="4539"/>
<dbReference type="GO" id="GO:0005743">
    <property type="term" value="C:mitochondrial inner membrane"/>
    <property type="evidence" value="ECO:0000250"/>
    <property type="project" value="UniProtKB"/>
</dbReference>
<dbReference type="GO" id="GO:0045271">
    <property type="term" value="C:respiratory chain complex I"/>
    <property type="evidence" value="ECO:0000250"/>
    <property type="project" value="UniProtKB"/>
</dbReference>
<dbReference type="GO" id="GO:0008137">
    <property type="term" value="F:NADH dehydrogenase (ubiquinone) activity"/>
    <property type="evidence" value="ECO:0000250"/>
    <property type="project" value="UniProtKB"/>
</dbReference>
<dbReference type="GO" id="GO:0042773">
    <property type="term" value="P:ATP synthesis coupled electron transport"/>
    <property type="evidence" value="ECO:0007669"/>
    <property type="project" value="InterPro"/>
</dbReference>
<dbReference type="FunFam" id="1.10.287.3510:FF:000002">
    <property type="entry name" value="NADH-ubiquinone oxidoreductase chain 4L"/>
    <property type="match status" value="1"/>
</dbReference>
<dbReference type="Gene3D" id="1.10.287.3510">
    <property type="match status" value="1"/>
</dbReference>
<dbReference type="InterPro" id="IPR001133">
    <property type="entry name" value="NADH_UbQ_OxRdtase_chain4L/K"/>
</dbReference>
<dbReference type="InterPro" id="IPR039428">
    <property type="entry name" value="NUOK/Mnh_C1-like"/>
</dbReference>
<dbReference type="PANTHER" id="PTHR11434:SF0">
    <property type="entry name" value="NADH-UBIQUINONE OXIDOREDUCTASE CHAIN 4L"/>
    <property type="match status" value="1"/>
</dbReference>
<dbReference type="PANTHER" id="PTHR11434">
    <property type="entry name" value="NADH-UBIQUINONE OXIDOREDUCTASE SUBUNIT ND4L"/>
    <property type="match status" value="1"/>
</dbReference>
<dbReference type="Pfam" id="PF00420">
    <property type="entry name" value="Oxidored_q2"/>
    <property type="match status" value="1"/>
</dbReference>
<feature type="chain" id="PRO_0000275132" description="NADH-ubiquinone oxidoreductase chain 4L">
    <location>
        <begin position="1"/>
        <end position="98"/>
    </location>
</feature>
<feature type="transmembrane region" description="Helical" evidence="3">
    <location>
        <begin position="1"/>
        <end position="21"/>
    </location>
</feature>
<feature type="transmembrane region" description="Helical" evidence="3">
    <location>
        <begin position="28"/>
        <end position="48"/>
    </location>
</feature>
<feature type="transmembrane region" description="Helical" evidence="3">
    <location>
        <begin position="61"/>
        <end position="81"/>
    </location>
</feature>
<evidence type="ECO:0000250" key="1">
    <source>
        <dbReference type="UniProtKB" id="P03901"/>
    </source>
</evidence>
<evidence type="ECO:0000250" key="2">
    <source>
        <dbReference type="UniProtKB" id="P03902"/>
    </source>
</evidence>
<evidence type="ECO:0000255" key="3"/>
<evidence type="ECO:0000305" key="4"/>
<gene>
    <name type="primary">MT-ND4L</name>
    <name type="synonym">MTND4L</name>
    <name type="synonym">NADH4L</name>
    <name type="synonym">ND4L</name>
</gene>
<reference key="1">
    <citation type="journal article" date="2004" name="Gene">
        <title>Marsupial relationships and a timeline for marsupial radiation in South Gondwana.</title>
        <authorList>
            <person name="Nilsson M.A."/>
            <person name="Arnason U."/>
            <person name="Spencer P.B.S."/>
            <person name="Janke A."/>
        </authorList>
    </citation>
    <scope>NUCLEOTIDE SEQUENCE [GENOMIC DNA]</scope>
</reference>
<geneLocation type="mitochondrion"/>
<keyword id="KW-0249">Electron transport</keyword>
<keyword id="KW-0472">Membrane</keyword>
<keyword id="KW-0496">Mitochondrion</keyword>
<keyword id="KW-0999">Mitochondrion inner membrane</keyword>
<keyword id="KW-0520">NAD</keyword>
<keyword id="KW-0679">Respiratory chain</keyword>
<keyword id="KW-1278">Translocase</keyword>
<keyword id="KW-0812">Transmembrane</keyword>
<keyword id="KW-1133">Transmembrane helix</keyword>
<keyword id="KW-0813">Transport</keyword>
<keyword id="KW-0830">Ubiquinone</keyword>
<sequence>MASINLNIIMAFIMALMGVLIYRSHLMSTLLCLEGMMLSLFILVTLLISQSHMLTTSMMPLILLVFSACEAGVGLALLVTISTTYGNDHVQNLNLLQC</sequence>
<comment type="function">
    <text evidence="1">Core subunit of the mitochondrial membrane respiratory chain NADH dehydrogenase (Complex I) which catalyzes electron transfer from NADH through the respiratory chain, using ubiquinone as an electron acceptor. Part of the enzyme membrane arm which is embedded in the lipid bilayer and involved in proton translocation.</text>
</comment>
<comment type="catalytic activity">
    <reaction evidence="1">
        <text>a ubiquinone + NADH + 5 H(+)(in) = a ubiquinol + NAD(+) + 4 H(+)(out)</text>
        <dbReference type="Rhea" id="RHEA:29091"/>
        <dbReference type="Rhea" id="RHEA-COMP:9565"/>
        <dbReference type="Rhea" id="RHEA-COMP:9566"/>
        <dbReference type="ChEBI" id="CHEBI:15378"/>
        <dbReference type="ChEBI" id="CHEBI:16389"/>
        <dbReference type="ChEBI" id="CHEBI:17976"/>
        <dbReference type="ChEBI" id="CHEBI:57540"/>
        <dbReference type="ChEBI" id="CHEBI:57945"/>
        <dbReference type="EC" id="7.1.1.2"/>
    </reaction>
    <physiologicalReaction direction="left-to-right" evidence="1">
        <dbReference type="Rhea" id="RHEA:29092"/>
    </physiologicalReaction>
</comment>
<comment type="subunit">
    <text evidence="2">Core subunit of respiratory chain NADH dehydrogenase (Complex I) which is composed of 45 different subunits.</text>
</comment>
<comment type="subcellular location">
    <subcellularLocation>
        <location evidence="2">Mitochondrion inner membrane</location>
        <topology evidence="3">Multi-pass membrane protein</topology>
    </subcellularLocation>
</comment>
<comment type="similarity">
    <text evidence="4">Belongs to the complex I subunit 4L family.</text>
</comment>
<name>NU4LM_THYEL</name>
<protein>
    <recommendedName>
        <fullName>NADH-ubiquinone oxidoreductase chain 4L</fullName>
        <ecNumber>7.1.1.2</ecNumber>
    </recommendedName>
    <alternativeName>
        <fullName>NADH dehydrogenase subunit 4L</fullName>
    </alternativeName>
</protein>
<proteinExistence type="inferred from homology"/>